<reference key="1">
    <citation type="journal article" date="1997" name="Nature">
        <title>The complete genome sequence of the hyperthermophilic, sulphate-reducing archaeon Archaeoglobus fulgidus.</title>
        <authorList>
            <person name="Klenk H.-P."/>
            <person name="Clayton R.A."/>
            <person name="Tomb J.-F."/>
            <person name="White O."/>
            <person name="Nelson K.E."/>
            <person name="Ketchum K.A."/>
            <person name="Dodson R.J."/>
            <person name="Gwinn M.L."/>
            <person name="Hickey E.K."/>
            <person name="Peterson J.D."/>
            <person name="Richardson D.L."/>
            <person name="Kerlavage A.R."/>
            <person name="Graham D.E."/>
            <person name="Kyrpides N.C."/>
            <person name="Fleischmann R.D."/>
            <person name="Quackenbush J."/>
            <person name="Lee N.H."/>
            <person name="Sutton G.G."/>
            <person name="Gill S.R."/>
            <person name="Kirkness E.F."/>
            <person name="Dougherty B.A."/>
            <person name="McKenney K."/>
            <person name="Adams M.D."/>
            <person name="Loftus B.J."/>
            <person name="Peterson S.N."/>
            <person name="Reich C.I."/>
            <person name="McNeil L.K."/>
            <person name="Badger J.H."/>
            <person name="Glodek A."/>
            <person name="Zhou L."/>
            <person name="Overbeek R."/>
            <person name="Gocayne J.D."/>
            <person name="Weidman J.F."/>
            <person name="McDonald L.A."/>
            <person name="Utterback T.R."/>
            <person name="Cotton M.D."/>
            <person name="Spriggs T."/>
            <person name="Artiach P."/>
            <person name="Kaine B.P."/>
            <person name="Sykes S.M."/>
            <person name="Sadow P.W."/>
            <person name="D'Andrea K.P."/>
            <person name="Bowman C."/>
            <person name="Fujii C."/>
            <person name="Garland S.A."/>
            <person name="Mason T.M."/>
            <person name="Olsen G.J."/>
            <person name="Fraser C.M."/>
            <person name="Smith H.O."/>
            <person name="Woese C.R."/>
            <person name="Venter J.C."/>
        </authorList>
    </citation>
    <scope>NUCLEOTIDE SEQUENCE [LARGE SCALE GENOMIC DNA]</scope>
    <source>
        <strain>ATCC 49558 / DSM 4304 / JCM 9628 / NBRC 100126 / VC-16</strain>
    </source>
</reference>
<dbReference type="EC" id="2.7.1.71"/>
<dbReference type="EMBL" id="AE000782">
    <property type="protein sequence ID" value="AAB90713.1"/>
    <property type="molecule type" value="Genomic_DNA"/>
</dbReference>
<dbReference type="PIR" id="H69314">
    <property type="entry name" value="H69314"/>
</dbReference>
<dbReference type="SMR" id="O29730"/>
<dbReference type="STRING" id="224325.AF_0520"/>
<dbReference type="PaxDb" id="224325-AF_0520"/>
<dbReference type="EnsemblBacteria" id="AAB90713">
    <property type="protein sequence ID" value="AAB90713"/>
    <property type="gene ID" value="AF_0520"/>
</dbReference>
<dbReference type="KEGG" id="afu:AF_0520"/>
<dbReference type="eggNOG" id="arCOG01025">
    <property type="taxonomic scope" value="Archaea"/>
</dbReference>
<dbReference type="HOGENOM" id="CLU_073768_0_0_2"/>
<dbReference type="PhylomeDB" id="O29730"/>
<dbReference type="UniPathway" id="UPA00053">
    <property type="reaction ID" value="UER00088"/>
</dbReference>
<dbReference type="Proteomes" id="UP000002199">
    <property type="component" value="Chromosome"/>
</dbReference>
<dbReference type="GO" id="GO:0005737">
    <property type="term" value="C:cytoplasm"/>
    <property type="evidence" value="ECO:0007669"/>
    <property type="project" value="UniProtKB-SubCell"/>
</dbReference>
<dbReference type="GO" id="GO:0005524">
    <property type="term" value="F:ATP binding"/>
    <property type="evidence" value="ECO:0007669"/>
    <property type="project" value="UniProtKB-UniRule"/>
</dbReference>
<dbReference type="GO" id="GO:0004765">
    <property type="term" value="F:shikimate kinase activity"/>
    <property type="evidence" value="ECO:0007669"/>
    <property type="project" value="UniProtKB-UniRule"/>
</dbReference>
<dbReference type="GO" id="GO:0008652">
    <property type="term" value="P:amino acid biosynthetic process"/>
    <property type="evidence" value="ECO:0007669"/>
    <property type="project" value="UniProtKB-KW"/>
</dbReference>
<dbReference type="GO" id="GO:0009073">
    <property type="term" value="P:aromatic amino acid family biosynthetic process"/>
    <property type="evidence" value="ECO:0007669"/>
    <property type="project" value="UniProtKB-KW"/>
</dbReference>
<dbReference type="GO" id="GO:0009423">
    <property type="term" value="P:chorismate biosynthetic process"/>
    <property type="evidence" value="ECO:0007669"/>
    <property type="project" value="UniProtKB-UniRule"/>
</dbReference>
<dbReference type="Gene3D" id="3.30.230.10">
    <property type="match status" value="1"/>
</dbReference>
<dbReference type="HAMAP" id="MF_00370">
    <property type="entry name" value="Shik_kinase_arch"/>
    <property type="match status" value="1"/>
</dbReference>
<dbReference type="InterPro" id="IPR006204">
    <property type="entry name" value="GHMP_kinase_N_dom"/>
</dbReference>
<dbReference type="InterPro" id="IPR006203">
    <property type="entry name" value="GHMP_knse_ATP-bd_CS"/>
</dbReference>
<dbReference type="InterPro" id="IPR020568">
    <property type="entry name" value="Ribosomal_Su5_D2-typ_SF"/>
</dbReference>
<dbReference type="InterPro" id="IPR014721">
    <property type="entry name" value="Ribsml_uS5_D2-typ_fold_subgr"/>
</dbReference>
<dbReference type="InterPro" id="IPR010189">
    <property type="entry name" value="SK_arc"/>
</dbReference>
<dbReference type="NCBIfam" id="TIGR01920">
    <property type="entry name" value="Shik_kin_archae"/>
    <property type="match status" value="1"/>
</dbReference>
<dbReference type="PANTHER" id="PTHR20861">
    <property type="entry name" value="HOMOSERINE/4-DIPHOSPHOCYTIDYL-2-C-METHYL-D-ERYTHRITOL KINASE"/>
    <property type="match status" value="1"/>
</dbReference>
<dbReference type="PANTHER" id="PTHR20861:SF3">
    <property type="entry name" value="SHIKIMATE KINASE"/>
    <property type="match status" value="1"/>
</dbReference>
<dbReference type="Pfam" id="PF00288">
    <property type="entry name" value="GHMP_kinases_N"/>
    <property type="match status" value="1"/>
</dbReference>
<dbReference type="PIRSF" id="PIRSF005758">
    <property type="entry name" value="Shikimt_kin_arch"/>
    <property type="match status" value="1"/>
</dbReference>
<dbReference type="SUPFAM" id="SSF54211">
    <property type="entry name" value="Ribosomal protein S5 domain 2-like"/>
    <property type="match status" value="1"/>
</dbReference>
<dbReference type="PROSITE" id="PS00627">
    <property type="entry name" value="GHMP_KINASES_ATP"/>
    <property type="match status" value="1"/>
</dbReference>
<evidence type="ECO:0000250" key="1"/>
<evidence type="ECO:0000255" key="2"/>
<evidence type="ECO:0000305" key="3"/>
<organism>
    <name type="scientific">Archaeoglobus fulgidus (strain ATCC 49558 / DSM 4304 / JCM 9628 / NBRC 100126 / VC-16)</name>
    <dbReference type="NCBI Taxonomy" id="224325"/>
    <lineage>
        <taxon>Archaea</taxon>
        <taxon>Methanobacteriati</taxon>
        <taxon>Methanobacteriota</taxon>
        <taxon>Archaeoglobi</taxon>
        <taxon>Archaeoglobales</taxon>
        <taxon>Archaeoglobaceae</taxon>
        <taxon>Archaeoglobus</taxon>
    </lineage>
</organism>
<keyword id="KW-0028">Amino-acid biosynthesis</keyword>
<keyword id="KW-0057">Aromatic amino acid biosynthesis</keyword>
<keyword id="KW-0067">ATP-binding</keyword>
<keyword id="KW-0963">Cytoplasm</keyword>
<keyword id="KW-0418">Kinase</keyword>
<keyword id="KW-0547">Nucleotide-binding</keyword>
<keyword id="KW-1185">Reference proteome</keyword>
<keyword id="KW-0808">Transferase</keyword>
<proteinExistence type="inferred from homology"/>
<comment type="catalytic activity">
    <reaction>
        <text>shikimate + ATP = 3-phosphoshikimate + ADP + H(+)</text>
        <dbReference type="Rhea" id="RHEA:13121"/>
        <dbReference type="ChEBI" id="CHEBI:15378"/>
        <dbReference type="ChEBI" id="CHEBI:30616"/>
        <dbReference type="ChEBI" id="CHEBI:36208"/>
        <dbReference type="ChEBI" id="CHEBI:145989"/>
        <dbReference type="ChEBI" id="CHEBI:456216"/>
        <dbReference type="EC" id="2.7.1.71"/>
    </reaction>
</comment>
<comment type="pathway">
    <text>Metabolic intermediate biosynthesis; chorismate biosynthesis; chorismate from D-erythrose 4-phosphate and phosphoenolpyruvate: step 5/7.</text>
</comment>
<comment type="subcellular location">
    <subcellularLocation>
        <location evidence="1">Cytoplasm</location>
    </subcellularLocation>
</comment>
<comment type="similarity">
    <text evidence="3">Belongs to the GHMP kinase family. Archaeal shikimate kinase subfamily.</text>
</comment>
<accession>O29730</accession>
<name>AROK_ARCFU</name>
<protein>
    <recommendedName>
        <fullName>Shikimate kinase</fullName>
        <shortName>SK</shortName>
        <ecNumber>2.7.1.71</ecNumber>
    </recommendedName>
</protein>
<gene>
    <name type="primary">aroK</name>
    <name type="ordered locus">AF_0520</name>
</gene>
<sequence>MMRAKAYAAGTVLNALPTGIGSAFGIEMHTIVKLRPSDELKVFVNGVERRSIVAERILNSMDVTAEVIVESEIPGGSGLGSSSAFVNALICAVKKMKGEELNAFEILRSNARFSLEAGISYTGAFDDASASMLGGFVVSDNRKMRLIRTDEFEGYSAVLIPKFSRGKVDWRRLRERASEVEGAVEAAMRGEYCKAMKLNTEYICKMLGYPLEIAEKGWEKGICCGISGNGPSYVAFGSKNEMEALAETWGEYGRVYVRRVADEPAEDVVIPTPFFRKLDG</sequence>
<feature type="chain" id="PRO_0000141571" description="Shikimate kinase">
    <location>
        <begin position="1"/>
        <end position="280"/>
    </location>
</feature>
<feature type="binding site" evidence="2">
    <location>
        <begin position="74"/>
        <end position="84"/>
    </location>
    <ligand>
        <name>ATP</name>
        <dbReference type="ChEBI" id="CHEBI:30616"/>
    </ligand>
</feature>